<protein>
    <recommendedName>
        <fullName>T-cell acute lymphocytic leukemia protein 1</fullName>
        <shortName>TAL-1</shortName>
    </recommendedName>
    <alternativeName>
        <fullName>FrSCL</fullName>
    </alternativeName>
    <alternativeName>
        <fullName>Stem cell protein</fullName>
    </alternativeName>
</protein>
<comment type="function">
    <text evidence="1">Transcription factor that plays a pivotal role in hemopoietic and endothelial development.</text>
</comment>
<comment type="subcellular location">
    <subcellularLocation>
        <location evidence="2 3">Nucleus</location>
    </subcellularLocation>
</comment>
<comment type="tissue specificity">
    <text evidence="5">Expressed in the main hemopoietic organs in adults, namely the kidney and the spleen. Also expressed in the liver, brain, gill and gonads.</text>
</comment>
<sequence>MMEKRQPELCPGSPDAESGPGKREDAAIISRQNGCKEDEESKREEGDKEGGGRFKGDEETDDVPLQNSSNGTSISIIINGVTKETASHNALDLKREVPVIELSRRDAIKAVEQRTESHLVPITELRRPPQLPLPPQQRDDARMVQLSPNAFPVPARAMLYNLAQPLAAINSLGGESEQYSMYPSNRVKRRPAPYEVELDEAKIVRRIFTNSRERWRQQNVNGAFAELRKLIPTHPPDKKLSKNEILRLAMKYISFLSNLLEDQDGGRNVSSTTDGETGLMVGAHEVGPQGGPHQDRVVGLARDDIMETMSPGSSCGSLPDGDADGSPESFMEDQDSPPAPRTLTASRGPPLHLTTRDLRRNGRPLDGSSRR</sequence>
<gene>
    <name evidence="1" type="primary">tal1</name>
    <name evidence="7" type="synonym">scl</name>
</gene>
<evidence type="ECO:0000250" key="1">
    <source>
        <dbReference type="UniProtKB" id="O93507"/>
    </source>
</evidence>
<evidence type="ECO:0000250" key="2">
    <source>
        <dbReference type="UniProtKB" id="P22091"/>
    </source>
</evidence>
<evidence type="ECO:0000255" key="3">
    <source>
        <dbReference type="PROSITE-ProRule" id="PRU00981"/>
    </source>
</evidence>
<evidence type="ECO:0000256" key="4">
    <source>
        <dbReference type="SAM" id="MobiDB-lite"/>
    </source>
</evidence>
<evidence type="ECO:0000269" key="5">
    <source>
    </source>
</evidence>
<evidence type="ECO:0000305" key="6"/>
<evidence type="ECO:0000312" key="7">
    <source>
        <dbReference type="EMBL" id="CAC39451.1"/>
    </source>
</evidence>
<proteinExistence type="evidence at transcript level"/>
<name>TAL1_TAKRU</name>
<keyword id="KW-0217">Developmental protein</keyword>
<keyword id="KW-0221">Differentiation</keyword>
<keyword id="KW-0238">DNA-binding</keyword>
<keyword id="KW-0539">Nucleus</keyword>
<keyword id="KW-1185">Reference proteome</keyword>
<keyword id="KW-0804">Transcription</keyword>
<keyword id="KW-0805">Transcription regulation</keyword>
<feature type="chain" id="PRO_0000320004" description="T-cell acute lymphocytic leukemia protein 1">
    <location>
        <begin position="1"/>
        <end position="371"/>
    </location>
</feature>
<feature type="domain" description="bHLH" evidence="3">
    <location>
        <begin position="204"/>
        <end position="256"/>
    </location>
</feature>
<feature type="region of interest" description="Disordered" evidence="4">
    <location>
        <begin position="1"/>
        <end position="71"/>
    </location>
</feature>
<feature type="region of interest" description="Disordered" evidence="4">
    <location>
        <begin position="263"/>
        <end position="371"/>
    </location>
</feature>
<feature type="compositionally biased region" description="Basic and acidic residues" evidence="4">
    <location>
        <begin position="34"/>
        <end position="57"/>
    </location>
</feature>
<feature type="compositionally biased region" description="Basic and acidic residues" evidence="4">
    <location>
        <begin position="293"/>
        <end position="305"/>
    </location>
</feature>
<feature type="compositionally biased region" description="Acidic residues" evidence="4">
    <location>
        <begin position="321"/>
        <end position="335"/>
    </location>
</feature>
<organism>
    <name type="scientific">Takifugu rubripes</name>
    <name type="common">Japanese pufferfish</name>
    <name type="synonym">Fugu rubripes</name>
    <dbReference type="NCBI Taxonomy" id="31033"/>
    <lineage>
        <taxon>Eukaryota</taxon>
        <taxon>Metazoa</taxon>
        <taxon>Chordata</taxon>
        <taxon>Craniata</taxon>
        <taxon>Vertebrata</taxon>
        <taxon>Euteleostomi</taxon>
        <taxon>Actinopterygii</taxon>
        <taxon>Neopterygii</taxon>
        <taxon>Teleostei</taxon>
        <taxon>Neoteleostei</taxon>
        <taxon>Acanthomorphata</taxon>
        <taxon>Eupercaria</taxon>
        <taxon>Tetraodontiformes</taxon>
        <taxon>Tetradontoidea</taxon>
        <taxon>Tetraodontidae</taxon>
        <taxon>Takifugu</taxon>
    </lineage>
</organism>
<reference evidence="6 7" key="1">
    <citation type="journal article" date="2001" name="Proc. Natl. Acad. Sci. U.S.A.">
        <title>Regulation of the stem cell leukemia (SCL) gene: a tale of two fishes.</title>
        <authorList>
            <person name="Barton L.M."/>
            <person name="Goettgens B."/>
            <person name="Gering M."/>
            <person name="Gilbert J.G.R."/>
            <person name="Grafham D."/>
            <person name="Rogers J."/>
            <person name="Bentley D."/>
            <person name="Patient R.K."/>
            <person name="Green A.R."/>
        </authorList>
    </citation>
    <scope>NUCLEOTIDE SEQUENCE [GENOMIC DNA]</scope>
    <scope>TISSUE SPECIFICITY</scope>
</reference>
<accession>Q90YI8</accession>
<dbReference type="EMBL" id="AJ131019">
    <property type="protein sequence ID" value="CAC39451.1"/>
    <property type="molecule type" value="Genomic_DNA"/>
</dbReference>
<dbReference type="SMR" id="Q90YI8"/>
<dbReference type="FunCoup" id="Q90YI8">
    <property type="interactions" value="906"/>
</dbReference>
<dbReference type="STRING" id="31033.ENSTRUP00000055776"/>
<dbReference type="eggNOG" id="KOG4029">
    <property type="taxonomic scope" value="Eukaryota"/>
</dbReference>
<dbReference type="InParanoid" id="Q90YI8"/>
<dbReference type="OrthoDB" id="10069510at2759"/>
<dbReference type="Proteomes" id="UP000005226">
    <property type="component" value="Unplaced"/>
</dbReference>
<dbReference type="GO" id="GO:0005634">
    <property type="term" value="C:nucleus"/>
    <property type="evidence" value="ECO:0007669"/>
    <property type="project" value="UniProtKB-SubCell"/>
</dbReference>
<dbReference type="GO" id="GO:0003677">
    <property type="term" value="F:DNA binding"/>
    <property type="evidence" value="ECO:0000250"/>
    <property type="project" value="UniProtKB"/>
</dbReference>
<dbReference type="GO" id="GO:0000981">
    <property type="term" value="F:DNA-binding transcription factor activity, RNA polymerase II-specific"/>
    <property type="evidence" value="ECO:0007669"/>
    <property type="project" value="InterPro"/>
</dbReference>
<dbReference type="GO" id="GO:0046983">
    <property type="term" value="F:protein dimerization activity"/>
    <property type="evidence" value="ECO:0007669"/>
    <property type="project" value="InterPro"/>
</dbReference>
<dbReference type="GO" id="GO:0000978">
    <property type="term" value="F:RNA polymerase II cis-regulatory region sequence-specific DNA binding"/>
    <property type="evidence" value="ECO:0007669"/>
    <property type="project" value="TreeGrafter"/>
</dbReference>
<dbReference type="GO" id="GO:0001525">
    <property type="term" value="P:angiogenesis"/>
    <property type="evidence" value="ECO:0000250"/>
    <property type="project" value="UniProtKB"/>
</dbReference>
<dbReference type="GO" id="GO:0048844">
    <property type="term" value="P:artery morphogenesis"/>
    <property type="evidence" value="ECO:0000250"/>
    <property type="project" value="UniProtKB"/>
</dbReference>
<dbReference type="GO" id="GO:0060216">
    <property type="term" value="P:definitive hemopoiesis"/>
    <property type="evidence" value="ECO:0000250"/>
    <property type="project" value="UniProtKB"/>
</dbReference>
<dbReference type="GO" id="GO:0060214">
    <property type="term" value="P:endocardium formation"/>
    <property type="evidence" value="ECO:0000250"/>
    <property type="project" value="UniProtKB"/>
</dbReference>
<dbReference type="GO" id="GO:0030218">
    <property type="term" value="P:erythrocyte differentiation"/>
    <property type="evidence" value="ECO:0000250"/>
    <property type="project" value="UniProtKB"/>
</dbReference>
<dbReference type="GO" id="GO:0060217">
    <property type="term" value="P:hemangioblast cell differentiation"/>
    <property type="evidence" value="ECO:0000250"/>
    <property type="project" value="UniProtKB"/>
</dbReference>
<dbReference type="GO" id="GO:0060218">
    <property type="term" value="P:hematopoietic stem cell differentiation"/>
    <property type="evidence" value="ECO:0000250"/>
    <property type="project" value="UniProtKB"/>
</dbReference>
<dbReference type="GO" id="GO:0030099">
    <property type="term" value="P:myeloid cell differentiation"/>
    <property type="evidence" value="ECO:0000250"/>
    <property type="project" value="UniProtKB"/>
</dbReference>
<dbReference type="GO" id="GO:0060215">
    <property type="term" value="P:primitive hemopoiesis"/>
    <property type="evidence" value="ECO:0000250"/>
    <property type="project" value="UniProtKB"/>
</dbReference>
<dbReference type="GO" id="GO:0001570">
    <property type="term" value="P:vasculogenesis"/>
    <property type="evidence" value="ECO:0000250"/>
    <property type="project" value="UniProtKB"/>
</dbReference>
<dbReference type="CDD" id="cd11413">
    <property type="entry name" value="bHLH_TS_TAL_LYL"/>
    <property type="match status" value="1"/>
</dbReference>
<dbReference type="FunFam" id="4.10.280.10:FF:000015">
    <property type="entry name" value="T-cell acute lymphocytic leukemia 1"/>
    <property type="match status" value="1"/>
</dbReference>
<dbReference type="Gene3D" id="4.10.280.10">
    <property type="entry name" value="Helix-loop-helix DNA-binding domain"/>
    <property type="match status" value="1"/>
</dbReference>
<dbReference type="InterPro" id="IPR011598">
    <property type="entry name" value="bHLH_dom"/>
</dbReference>
<dbReference type="InterPro" id="IPR036638">
    <property type="entry name" value="HLH_DNA-bd_sf"/>
</dbReference>
<dbReference type="InterPro" id="IPR040238">
    <property type="entry name" value="TAL-like"/>
</dbReference>
<dbReference type="PANTHER" id="PTHR13864:SF25">
    <property type="entry name" value="PROTEIN LYL-1-LIKE ISOFORM X1-RELATED"/>
    <property type="match status" value="1"/>
</dbReference>
<dbReference type="PANTHER" id="PTHR13864">
    <property type="entry name" value="T-CELL ACUTE LYMPHOCYTIC LEUKEMIA/STEM CELL LEUKEMIA-RELATED"/>
    <property type="match status" value="1"/>
</dbReference>
<dbReference type="Pfam" id="PF00010">
    <property type="entry name" value="HLH"/>
    <property type="match status" value="1"/>
</dbReference>
<dbReference type="SMART" id="SM00353">
    <property type="entry name" value="HLH"/>
    <property type="match status" value="1"/>
</dbReference>
<dbReference type="SUPFAM" id="SSF47459">
    <property type="entry name" value="HLH, helix-loop-helix DNA-binding domain"/>
    <property type="match status" value="1"/>
</dbReference>
<dbReference type="PROSITE" id="PS50888">
    <property type="entry name" value="BHLH"/>
    <property type="match status" value="1"/>
</dbReference>